<organism>
    <name type="scientific">Talaromyces stipitatus (strain ATCC 10500 / CBS 375.48 / QM 6759 / NRRL 1006)</name>
    <name type="common">Penicillium stipitatum</name>
    <dbReference type="NCBI Taxonomy" id="441959"/>
    <lineage>
        <taxon>Eukaryota</taxon>
        <taxon>Fungi</taxon>
        <taxon>Dikarya</taxon>
        <taxon>Ascomycota</taxon>
        <taxon>Pezizomycotina</taxon>
        <taxon>Eurotiomycetes</taxon>
        <taxon>Eurotiomycetidae</taxon>
        <taxon>Eurotiales</taxon>
        <taxon>Trichocomaceae</taxon>
        <taxon>Talaromyces</taxon>
        <taxon>Talaromyces sect. Talaromyces</taxon>
    </lineage>
</organism>
<evidence type="ECO:0000250" key="1"/>
<evidence type="ECO:0000305" key="2"/>
<protein>
    <recommendedName>
        <fullName>E3 ubiquitin ligase complex SCF subunit sconC</fullName>
    </recommendedName>
    <alternativeName>
        <fullName>Sulfur controller C</fullName>
    </alternativeName>
    <alternativeName>
        <fullName>Sulfur metabolite repression control protein C</fullName>
    </alternativeName>
</protein>
<feature type="chain" id="PRO_0000397271" description="E3 ubiquitin ligase complex SCF subunit sconC">
    <location>
        <begin position="1"/>
        <end position="160"/>
    </location>
</feature>
<feature type="region of interest" description="Interaction with the F-box domain of F-box proteins" evidence="1">
    <location>
        <begin position="101"/>
        <end position="160"/>
    </location>
</feature>
<accession>B8MDP8</accession>
<name>SKP1_TALSN</name>
<gene>
    <name type="primary">sconC</name>
    <name type="synonym">skpA</name>
    <name type="ORF">TSTA_120270</name>
</gene>
<keyword id="KW-1185">Reference proteome</keyword>
<keyword id="KW-0833">Ubl conjugation pathway</keyword>
<reference key="1">
    <citation type="journal article" date="2015" name="Genome Announc.">
        <title>Genome sequence of the AIDS-associated pathogen Penicillium marneffei (ATCC18224) and its near taxonomic relative Talaromyces stipitatus (ATCC10500).</title>
        <authorList>
            <person name="Nierman W.C."/>
            <person name="Fedorova-Abrams N.D."/>
            <person name="Andrianopoulos A."/>
        </authorList>
    </citation>
    <scope>NUCLEOTIDE SEQUENCE [LARGE SCALE GENOMIC DNA]</scope>
    <source>
        <strain>ATCC 10500 / CBS 375.48 / QM 6759 / NRRL 1006</strain>
    </source>
</reference>
<comment type="function">
    <text evidence="1">Essential component of the SCF (SKP1-CUL1-F-box protein) E3 ubiquitin ligase complexes, which mediate the ubiquitination and subsequent proteasomal degradation of target proteins. Controls sulfur metabolite repression, probably by mediating the inactivation or degradation of the metR transcription factor (By similarity).</text>
</comment>
<comment type="pathway">
    <text>Protein modification; protein ubiquitination.</text>
</comment>
<comment type="subunit">
    <text evidence="1">Component of the SCF (SKP1-CUL1-F-box protein) E3 ubiquitin ligase complexes.</text>
</comment>
<comment type="similarity">
    <text evidence="2">Belongs to the SKP1 family.</text>
</comment>
<proteinExistence type="inferred from homology"/>
<sequence>MSGQVTLQSSDQVNITVERAVAERSMLIKNLLEDLGESEEPVPIPNVNESVLKKVIEWCTHHKNDPQTTGEEDDNRRRTTEIDEWDQKFMQVDQEMLFEIILAANYLDIKALLDVGCKTVANMIKGKSPEEIRKTFNIQNDFTPEEEDQIRRENEWAEDR</sequence>
<dbReference type="EMBL" id="EQ962655">
    <property type="protein sequence ID" value="EED18277.1"/>
    <property type="molecule type" value="Genomic_DNA"/>
</dbReference>
<dbReference type="EMBL" id="EQ962655">
    <property type="protein sequence ID" value="EED18278.1"/>
    <property type="molecule type" value="Genomic_DNA"/>
</dbReference>
<dbReference type="RefSeq" id="XP_002482269.1">
    <property type="nucleotide sequence ID" value="XM_002482224.1"/>
</dbReference>
<dbReference type="RefSeq" id="XP_002482270.1">
    <property type="nucleotide sequence ID" value="XM_002482225.1"/>
</dbReference>
<dbReference type="SMR" id="B8MDP8"/>
<dbReference type="FunCoup" id="B8MDP8">
    <property type="interactions" value="818"/>
</dbReference>
<dbReference type="STRING" id="441959.B8MDP8"/>
<dbReference type="GeneID" id="8100011"/>
<dbReference type="VEuPathDB" id="FungiDB:TSTA_120270"/>
<dbReference type="eggNOG" id="KOG1724">
    <property type="taxonomic scope" value="Eukaryota"/>
</dbReference>
<dbReference type="HOGENOM" id="CLU_059252_4_0_1"/>
<dbReference type="InParanoid" id="B8MDP8"/>
<dbReference type="OMA" id="DKYTASM"/>
<dbReference type="OrthoDB" id="2342932at2759"/>
<dbReference type="PhylomeDB" id="B8MDP8"/>
<dbReference type="UniPathway" id="UPA00143"/>
<dbReference type="Proteomes" id="UP000001745">
    <property type="component" value="Unassembled WGS sequence"/>
</dbReference>
<dbReference type="GO" id="GO:0031518">
    <property type="term" value="C:CBF3 complex"/>
    <property type="evidence" value="ECO:0007669"/>
    <property type="project" value="EnsemblFungi"/>
</dbReference>
<dbReference type="GO" id="GO:0000776">
    <property type="term" value="C:kinetochore"/>
    <property type="evidence" value="ECO:0007669"/>
    <property type="project" value="EnsemblFungi"/>
</dbReference>
<dbReference type="GO" id="GO:0043224">
    <property type="term" value="C:nuclear SCF ubiquitin ligase complex"/>
    <property type="evidence" value="ECO:0007669"/>
    <property type="project" value="EnsemblFungi"/>
</dbReference>
<dbReference type="GO" id="GO:0043291">
    <property type="term" value="C:RAVE complex"/>
    <property type="evidence" value="ECO:0007669"/>
    <property type="project" value="EnsemblFungi"/>
</dbReference>
<dbReference type="GO" id="GO:0017117">
    <property type="term" value="C:single-stranded DNA-dependent ATP-dependent DNA helicase complex"/>
    <property type="evidence" value="ECO:0007669"/>
    <property type="project" value="EnsemblFungi"/>
</dbReference>
<dbReference type="GO" id="GO:0003688">
    <property type="term" value="F:DNA replication origin binding"/>
    <property type="evidence" value="ECO:0007669"/>
    <property type="project" value="EnsemblFungi"/>
</dbReference>
<dbReference type="GO" id="GO:0061630">
    <property type="term" value="F:ubiquitin protein ligase activity"/>
    <property type="evidence" value="ECO:0007669"/>
    <property type="project" value="EnsemblFungi"/>
</dbReference>
<dbReference type="GO" id="GO:0010458">
    <property type="term" value="P:exit from mitosis"/>
    <property type="evidence" value="ECO:0007669"/>
    <property type="project" value="EnsemblFungi"/>
</dbReference>
<dbReference type="GO" id="GO:0000082">
    <property type="term" value="P:G1/S transition of mitotic cell cycle"/>
    <property type="evidence" value="ECO:0007669"/>
    <property type="project" value="EnsemblFungi"/>
</dbReference>
<dbReference type="GO" id="GO:0000086">
    <property type="term" value="P:G2/M transition of mitotic cell cycle"/>
    <property type="evidence" value="ECO:0007669"/>
    <property type="project" value="EnsemblFungi"/>
</dbReference>
<dbReference type="GO" id="GO:0051382">
    <property type="term" value="P:kinetochore assembly"/>
    <property type="evidence" value="ECO:0007669"/>
    <property type="project" value="EnsemblFungi"/>
</dbReference>
<dbReference type="GO" id="GO:0101026">
    <property type="term" value="P:mitotic nuclear membrane biogenesis"/>
    <property type="evidence" value="ECO:0007669"/>
    <property type="project" value="EnsemblFungi"/>
</dbReference>
<dbReference type="GO" id="GO:2000766">
    <property type="term" value="P:negative regulation of cytoplasmic translation"/>
    <property type="evidence" value="ECO:0007669"/>
    <property type="project" value="EnsemblFungi"/>
</dbReference>
<dbReference type="GO" id="GO:0045841">
    <property type="term" value="P:negative regulation of mitotic metaphase/anaphase transition"/>
    <property type="evidence" value="ECO:0007669"/>
    <property type="project" value="EnsemblFungi"/>
</dbReference>
<dbReference type="GO" id="GO:0010828">
    <property type="term" value="P:positive regulation of D-glucose transmembrane transport"/>
    <property type="evidence" value="ECO:0007669"/>
    <property type="project" value="EnsemblFungi"/>
</dbReference>
<dbReference type="GO" id="GO:0045116">
    <property type="term" value="P:protein neddylation"/>
    <property type="evidence" value="ECO:0007669"/>
    <property type="project" value="EnsemblFungi"/>
</dbReference>
<dbReference type="GO" id="GO:0016567">
    <property type="term" value="P:protein ubiquitination"/>
    <property type="evidence" value="ECO:0007669"/>
    <property type="project" value="UniProtKB-UniPathway"/>
</dbReference>
<dbReference type="GO" id="GO:0000018">
    <property type="term" value="P:regulation of DNA recombination"/>
    <property type="evidence" value="ECO:0007669"/>
    <property type="project" value="EnsemblFungi"/>
</dbReference>
<dbReference type="GO" id="GO:0007096">
    <property type="term" value="P:regulation of exit from mitosis"/>
    <property type="evidence" value="ECO:0007669"/>
    <property type="project" value="EnsemblFungi"/>
</dbReference>
<dbReference type="GO" id="GO:0043254">
    <property type="term" value="P:regulation of protein-containing complex assembly"/>
    <property type="evidence" value="ECO:0007669"/>
    <property type="project" value="EnsemblFungi"/>
</dbReference>
<dbReference type="GO" id="GO:0000712">
    <property type="term" value="P:resolution of meiotic recombination intermediates"/>
    <property type="evidence" value="ECO:0007669"/>
    <property type="project" value="EnsemblFungi"/>
</dbReference>
<dbReference type="GO" id="GO:0031146">
    <property type="term" value="P:SCF-dependent proteasomal ubiquitin-dependent protein catabolic process"/>
    <property type="evidence" value="ECO:0007669"/>
    <property type="project" value="EnsemblFungi"/>
</dbReference>
<dbReference type="GO" id="GO:0000921">
    <property type="term" value="P:septin ring assembly"/>
    <property type="evidence" value="ECO:0007669"/>
    <property type="project" value="EnsemblFungi"/>
</dbReference>
<dbReference type="GO" id="GO:0030466">
    <property type="term" value="P:silent mating-type cassette heterochromatin formation"/>
    <property type="evidence" value="ECO:0007669"/>
    <property type="project" value="EnsemblFungi"/>
</dbReference>
<dbReference type="GO" id="GO:0007035">
    <property type="term" value="P:vacuolar acidification"/>
    <property type="evidence" value="ECO:0007669"/>
    <property type="project" value="EnsemblFungi"/>
</dbReference>
<dbReference type="GO" id="GO:0070072">
    <property type="term" value="P:vacuolar proton-transporting V-type ATPase complex assembly"/>
    <property type="evidence" value="ECO:0007669"/>
    <property type="project" value="EnsemblFungi"/>
</dbReference>
<dbReference type="CDD" id="cd18322">
    <property type="entry name" value="BTB_POZ_SKP1"/>
    <property type="match status" value="1"/>
</dbReference>
<dbReference type="FunFam" id="3.30.710.10:FF:000026">
    <property type="entry name" value="E3 ubiquitin ligase complex SCF subunit"/>
    <property type="match status" value="1"/>
</dbReference>
<dbReference type="Gene3D" id="3.30.710.10">
    <property type="entry name" value="Potassium Channel Kv1.1, Chain A"/>
    <property type="match status" value="1"/>
</dbReference>
<dbReference type="InterPro" id="IPR016897">
    <property type="entry name" value="SKP1"/>
</dbReference>
<dbReference type="InterPro" id="IPR001232">
    <property type="entry name" value="SKP1-like"/>
</dbReference>
<dbReference type="InterPro" id="IPR036296">
    <property type="entry name" value="SKP1-like_dim_sf"/>
</dbReference>
<dbReference type="InterPro" id="IPR011333">
    <property type="entry name" value="SKP1/BTB/POZ_sf"/>
</dbReference>
<dbReference type="InterPro" id="IPR016072">
    <property type="entry name" value="Skp1_comp_dimer"/>
</dbReference>
<dbReference type="InterPro" id="IPR016073">
    <property type="entry name" value="Skp1_comp_POZ"/>
</dbReference>
<dbReference type="PANTHER" id="PTHR11165">
    <property type="entry name" value="SKP1"/>
    <property type="match status" value="1"/>
</dbReference>
<dbReference type="Pfam" id="PF01466">
    <property type="entry name" value="Skp1"/>
    <property type="match status" value="1"/>
</dbReference>
<dbReference type="Pfam" id="PF03931">
    <property type="entry name" value="Skp1_POZ"/>
    <property type="match status" value="1"/>
</dbReference>
<dbReference type="PIRSF" id="PIRSF028729">
    <property type="entry name" value="E3_ubiquit_lig_SCF_Skp"/>
    <property type="match status" value="1"/>
</dbReference>
<dbReference type="SMART" id="SM00512">
    <property type="entry name" value="Skp1"/>
    <property type="match status" value="1"/>
</dbReference>
<dbReference type="SUPFAM" id="SSF54695">
    <property type="entry name" value="POZ domain"/>
    <property type="match status" value="1"/>
</dbReference>
<dbReference type="SUPFAM" id="SSF81382">
    <property type="entry name" value="Skp1 dimerisation domain-like"/>
    <property type="match status" value="1"/>
</dbReference>